<sequence length="681" mass="76867">MEKQIQVTLPDGTVKTFPAGTTPFQVAESISPRLAQAAVVARIQTTQPAAATVTAGSEADSKTASEAAMYSAADPGAPRLVDLSTPLEEDVQLALLTEKDPEALKVLRHSAAHLMATAVLELFPETKLGHGPATDAGFFYDFYRPTPFTPEDLKLIEGRMAEIAQRNDKFVREFIPREEGLAEFKAGDDFMKVHFIERFTQPGEAISLYRNGNFVDFCRGPHVPSTNRIKAFKVTNLAGAYWLGDEKNPQLQRLYGTAFFSKKDLDEHFARLEEIAKRDHRVLGKQLDLFSIQEIAGAGLIFWHPKGAMIRKIMEDWMREECIRRGYDLVYTPHVMRVQLWKTSGHEGFYSQNMFTPMELDDAEYRLKPMNCPGHILIYKSQPRSYRDLPVRYAELGNVYRYERSGTMHGLLRVRGFTQDDAHIFCTPEQIEDEVVACIDFAQSVLTTFGFMDFQVELSTWDPNDRKNYAGSDDKWNLAISSLESALTRKGIAYKTIAGEAAFYGPKIDIKLVDVLGRLWQLSTVQFDFNLPARFELEYVGEDGERHQPVMVHRALYGSVERFFGVLIEHYAGAFPLWLAPVQIGLVPISERHLAYAEKVQQQLEAAGFRVELDRRNEKMNAKIRDFTLQKFPYVLIMGDKEAEAGAVSVRTRGKGDQGSLPLDEFIGRATTLIDTKSGDL</sequence>
<accession>C1F9K5</accession>
<gene>
    <name evidence="1" type="primary">thrS</name>
    <name type="ordered locus">ACP_2162</name>
</gene>
<feature type="chain" id="PRO_1000203894" description="Threonine--tRNA ligase">
    <location>
        <begin position="1"/>
        <end position="681"/>
    </location>
</feature>
<feature type="domain" description="TGS" evidence="2">
    <location>
        <begin position="3"/>
        <end position="97"/>
    </location>
</feature>
<feature type="region of interest" description="Catalytic" evidence="1">
    <location>
        <begin position="279"/>
        <end position="576"/>
    </location>
</feature>
<feature type="binding site" evidence="1">
    <location>
        <position position="372"/>
    </location>
    <ligand>
        <name>Zn(2+)</name>
        <dbReference type="ChEBI" id="CHEBI:29105"/>
    </ligand>
</feature>
<feature type="binding site" evidence="1">
    <location>
        <position position="423"/>
    </location>
    <ligand>
        <name>Zn(2+)</name>
        <dbReference type="ChEBI" id="CHEBI:29105"/>
    </ligand>
</feature>
<feature type="binding site" evidence="1">
    <location>
        <position position="553"/>
    </location>
    <ligand>
        <name>Zn(2+)</name>
        <dbReference type="ChEBI" id="CHEBI:29105"/>
    </ligand>
</feature>
<organism>
    <name type="scientific">Acidobacterium capsulatum (strain ATCC 51196 / DSM 11244 / BCRC 80197 / JCM 7670 / NBRC 15755 / NCIMB 13165 / 161)</name>
    <dbReference type="NCBI Taxonomy" id="240015"/>
    <lineage>
        <taxon>Bacteria</taxon>
        <taxon>Pseudomonadati</taxon>
        <taxon>Acidobacteriota</taxon>
        <taxon>Terriglobia</taxon>
        <taxon>Terriglobales</taxon>
        <taxon>Acidobacteriaceae</taxon>
        <taxon>Acidobacterium</taxon>
    </lineage>
</organism>
<name>SYT_ACIC5</name>
<proteinExistence type="inferred from homology"/>
<evidence type="ECO:0000255" key="1">
    <source>
        <dbReference type="HAMAP-Rule" id="MF_00184"/>
    </source>
</evidence>
<evidence type="ECO:0000255" key="2">
    <source>
        <dbReference type="PROSITE-ProRule" id="PRU01228"/>
    </source>
</evidence>
<keyword id="KW-0030">Aminoacyl-tRNA synthetase</keyword>
<keyword id="KW-0067">ATP-binding</keyword>
<keyword id="KW-0963">Cytoplasm</keyword>
<keyword id="KW-0436">Ligase</keyword>
<keyword id="KW-0479">Metal-binding</keyword>
<keyword id="KW-0547">Nucleotide-binding</keyword>
<keyword id="KW-0648">Protein biosynthesis</keyword>
<keyword id="KW-1185">Reference proteome</keyword>
<keyword id="KW-0694">RNA-binding</keyword>
<keyword id="KW-0820">tRNA-binding</keyword>
<keyword id="KW-0862">Zinc</keyword>
<protein>
    <recommendedName>
        <fullName evidence="1">Threonine--tRNA ligase</fullName>
        <ecNumber evidence="1">6.1.1.3</ecNumber>
    </recommendedName>
    <alternativeName>
        <fullName evidence="1">Threonyl-tRNA synthetase</fullName>
        <shortName evidence="1">ThrRS</shortName>
    </alternativeName>
</protein>
<reference key="1">
    <citation type="journal article" date="2009" name="Appl. Environ. Microbiol.">
        <title>Three genomes from the phylum Acidobacteria provide insight into the lifestyles of these microorganisms in soils.</title>
        <authorList>
            <person name="Ward N.L."/>
            <person name="Challacombe J.F."/>
            <person name="Janssen P.H."/>
            <person name="Henrissat B."/>
            <person name="Coutinho P.M."/>
            <person name="Wu M."/>
            <person name="Xie G."/>
            <person name="Haft D.H."/>
            <person name="Sait M."/>
            <person name="Badger J."/>
            <person name="Barabote R.D."/>
            <person name="Bradley B."/>
            <person name="Brettin T.S."/>
            <person name="Brinkac L.M."/>
            <person name="Bruce D."/>
            <person name="Creasy T."/>
            <person name="Daugherty S.C."/>
            <person name="Davidsen T.M."/>
            <person name="DeBoy R.T."/>
            <person name="Detter J.C."/>
            <person name="Dodson R.J."/>
            <person name="Durkin A.S."/>
            <person name="Ganapathy A."/>
            <person name="Gwinn-Giglio M."/>
            <person name="Han C.S."/>
            <person name="Khouri H."/>
            <person name="Kiss H."/>
            <person name="Kothari S.P."/>
            <person name="Madupu R."/>
            <person name="Nelson K.E."/>
            <person name="Nelson W.C."/>
            <person name="Paulsen I."/>
            <person name="Penn K."/>
            <person name="Ren Q."/>
            <person name="Rosovitz M.J."/>
            <person name="Selengut J.D."/>
            <person name="Shrivastava S."/>
            <person name="Sullivan S.A."/>
            <person name="Tapia R."/>
            <person name="Thompson L.S."/>
            <person name="Watkins K.L."/>
            <person name="Yang Q."/>
            <person name="Yu C."/>
            <person name="Zafar N."/>
            <person name="Zhou L."/>
            <person name="Kuske C.R."/>
        </authorList>
    </citation>
    <scope>NUCLEOTIDE SEQUENCE [LARGE SCALE GENOMIC DNA]</scope>
    <source>
        <strain>ATCC 51196 / DSM 11244 / BCRC 80197 / JCM 7670 / NBRC 15755 / NCIMB 13165 / 161</strain>
    </source>
</reference>
<dbReference type="EC" id="6.1.1.3" evidence="1"/>
<dbReference type="EMBL" id="CP001472">
    <property type="protein sequence ID" value="ACO34358.1"/>
    <property type="molecule type" value="Genomic_DNA"/>
</dbReference>
<dbReference type="RefSeq" id="WP_015897261.1">
    <property type="nucleotide sequence ID" value="NC_012483.1"/>
</dbReference>
<dbReference type="SMR" id="C1F9K5"/>
<dbReference type="FunCoup" id="C1F9K5">
    <property type="interactions" value="572"/>
</dbReference>
<dbReference type="STRING" id="240015.ACP_2162"/>
<dbReference type="KEGG" id="aca:ACP_2162"/>
<dbReference type="eggNOG" id="COG0441">
    <property type="taxonomic scope" value="Bacteria"/>
</dbReference>
<dbReference type="HOGENOM" id="CLU_008554_0_1_0"/>
<dbReference type="InParanoid" id="C1F9K5"/>
<dbReference type="OrthoDB" id="9802304at2"/>
<dbReference type="Proteomes" id="UP000002207">
    <property type="component" value="Chromosome"/>
</dbReference>
<dbReference type="GO" id="GO:0005737">
    <property type="term" value="C:cytoplasm"/>
    <property type="evidence" value="ECO:0007669"/>
    <property type="project" value="UniProtKB-SubCell"/>
</dbReference>
<dbReference type="GO" id="GO:0005524">
    <property type="term" value="F:ATP binding"/>
    <property type="evidence" value="ECO:0007669"/>
    <property type="project" value="UniProtKB-UniRule"/>
</dbReference>
<dbReference type="GO" id="GO:0046872">
    <property type="term" value="F:metal ion binding"/>
    <property type="evidence" value="ECO:0007669"/>
    <property type="project" value="UniProtKB-KW"/>
</dbReference>
<dbReference type="GO" id="GO:0004829">
    <property type="term" value="F:threonine-tRNA ligase activity"/>
    <property type="evidence" value="ECO:0007669"/>
    <property type="project" value="UniProtKB-UniRule"/>
</dbReference>
<dbReference type="GO" id="GO:0000049">
    <property type="term" value="F:tRNA binding"/>
    <property type="evidence" value="ECO:0007669"/>
    <property type="project" value="UniProtKB-KW"/>
</dbReference>
<dbReference type="GO" id="GO:0006435">
    <property type="term" value="P:threonyl-tRNA aminoacylation"/>
    <property type="evidence" value="ECO:0007669"/>
    <property type="project" value="UniProtKB-UniRule"/>
</dbReference>
<dbReference type="CDD" id="cd01667">
    <property type="entry name" value="TGS_ThrRS"/>
    <property type="match status" value="1"/>
</dbReference>
<dbReference type="CDD" id="cd00860">
    <property type="entry name" value="ThrRS_anticodon"/>
    <property type="match status" value="1"/>
</dbReference>
<dbReference type="CDD" id="cd00771">
    <property type="entry name" value="ThrRS_core"/>
    <property type="match status" value="1"/>
</dbReference>
<dbReference type="FunFam" id="3.30.930.10:FF:000002">
    <property type="entry name" value="Threonine--tRNA ligase"/>
    <property type="match status" value="1"/>
</dbReference>
<dbReference type="FunFam" id="3.40.50.800:FF:000001">
    <property type="entry name" value="Threonine--tRNA ligase"/>
    <property type="match status" value="1"/>
</dbReference>
<dbReference type="FunFam" id="3.30.980.10:FF:000005">
    <property type="entry name" value="Threonyl-tRNA synthetase, mitochondrial"/>
    <property type="match status" value="1"/>
</dbReference>
<dbReference type="Gene3D" id="3.10.20.30">
    <property type="match status" value="1"/>
</dbReference>
<dbReference type="Gene3D" id="3.30.54.20">
    <property type="match status" value="1"/>
</dbReference>
<dbReference type="Gene3D" id="3.40.50.800">
    <property type="entry name" value="Anticodon-binding domain"/>
    <property type="match status" value="1"/>
</dbReference>
<dbReference type="Gene3D" id="3.30.930.10">
    <property type="entry name" value="Bira Bifunctional Protein, Domain 2"/>
    <property type="match status" value="1"/>
</dbReference>
<dbReference type="Gene3D" id="3.30.980.10">
    <property type="entry name" value="Threonyl-trna Synthetase, Chain A, domain 2"/>
    <property type="match status" value="1"/>
</dbReference>
<dbReference type="HAMAP" id="MF_00184">
    <property type="entry name" value="Thr_tRNA_synth"/>
    <property type="match status" value="1"/>
</dbReference>
<dbReference type="InterPro" id="IPR002314">
    <property type="entry name" value="aa-tRNA-synt_IIb"/>
</dbReference>
<dbReference type="InterPro" id="IPR006195">
    <property type="entry name" value="aa-tRNA-synth_II"/>
</dbReference>
<dbReference type="InterPro" id="IPR045864">
    <property type="entry name" value="aa-tRNA-synth_II/BPL/LPL"/>
</dbReference>
<dbReference type="InterPro" id="IPR004154">
    <property type="entry name" value="Anticodon-bd"/>
</dbReference>
<dbReference type="InterPro" id="IPR036621">
    <property type="entry name" value="Anticodon-bd_dom_sf"/>
</dbReference>
<dbReference type="InterPro" id="IPR012675">
    <property type="entry name" value="Beta-grasp_dom_sf"/>
</dbReference>
<dbReference type="InterPro" id="IPR004095">
    <property type="entry name" value="TGS"/>
</dbReference>
<dbReference type="InterPro" id="IPR012676">
    <property type="entry name" value="TGS-like"/>
</dbReference>
<dbReference type="InterPro" id="IPR002320">
    <property type="entry name" value="Thr-tRNA-ligase_IIa"/>
</dbReference>
<dbReference type="InterPro" id="IPR018163">
    <property type="entry name" value="Thr/Ala-tRNA-synth_IIc_edit"/>
</dbReference>
<dbReference type="InterPro" id="IPR047246">
    <property type="entry name" value="ThrRS_anticodon"/>
</dbReference>
<dbReference type="InterPro" id="IPR033728">
    <property type="entry name" value="ThrRS_core"/>
</dbReference>
<dbReference type="InterPro" id="IPR012947">
    <property type="entry name" value="tRNA_SAD"/>
</dbReference>
<dbReference type="NCBIfam" id="TIGR00418">
    <property type="entry name" value="thrS"/>
    <property type="match status" value="1"/>
</dbReference>
<dbReference type="PANTHER" id="PTHR11451:SF44">
    <property type="entry name" value="THREONINE--TRNA LIGASE, CHLOROPLASTIC_MITOCHONDRIAL 2"/>
    <property type="match status" value="1"/>
</dbReference>
<dbReference type="PANTHER" id="PTHR11451">
    <property type="entry name" value="THREONINE-TRNA LIGASE"/>
    <property type="match status" value="1"/>
</dbReference>
<dbReference type="Pfam" id="PF03129">
    <property type="entry name" value="HGTP_anticodon"/>
    <property type="match status" value="1"/>
</dbReference>
<dbReference type="Pfam" id="PF02824">
    <property type="entry name" value="TGS"/>
    <property type="match status" value="1"/>
</dbReference>
<dbReference type="Pfam" id="PF00587">
    <property type="entry name" value="tRNA-synt_2b"/>
    <property type="match status" value="1"/>
</dbReference>
<dbReference type="Pfam" id="PF07973">
    <property type="entry name" value="tRNA_SAD"/>
    <property type="match status" value="1"/>
</dbReference>
<dbReference type="PRINTS" id="PR01047">
    <property type="entry name" value="TRNASYNTHTHR"/>
</dbReference>
<dbReference type="SMART" id="SM00863">
    <property type="entry name" value="tRNA_SAD"/>
    <property type="match status" value="1"/>
</dbReference>
<dbReference type="SUPFAM" id="SSF52954">
    <property type="entry name" value="Class II aaRS ABD-related"/>
    <property type="match status" value="1"/>
</dbReference>
<dbReference type="SUPFAM" id="SSF55681">
    <property type="entry name" value="Class II aaRS and biotin synthetases"/>
    <property type="match status" value="1"/>
</dbReference>
<dbReference type="SUPFAM" id="SSF81271">
    <property type="entry name" value="TGS-like"/>
    <property type="match status" value="1"/>
</dbReference>
<dbReference type="SUPFAM" id="SSF55186">
    <property type="entry name" value="ThrRS/AlaRS common domain"/>
    <property type="match status" value="1"/>
</dbReference>
<dbReference type="PROSITE" id="PS50862">
    <property type="entry name" value="AA_TRNA_LIGASE_II"/>
    <property type="match status" value="1"/>
</dbReference>
<dbReference type="PROSITE" id="PS51880">
    <property type="entry name" value="TGS"/>
    <property type="match status" value="1"/>
</dbReference>
<comment type="function">
    <text evidence="1">Catalyzes the attachment of threonine to tRNA(Thr) in a two-step reaction: L-threonine is first activated by ATP to form Thr-AMP and then transferred to the acceptor end of tRNA(Thr). Also edits incorrectly charged L-seryl-tRNA(Thr).</text>
</comment>
<comment type="catalytic activity">
    <reaction evidence="1">
        <text>tRNA(Thr) + L-threonine + ATP = L-threonyl-tRNA(Thr) + AMP + diphosphate + H(+)</text>
        <dbReference type="Rhea" id="RHEA:24624"/>
        <dbReference type="Rhea" id="RHEA-COMP:9670"/>
        <dbReference type="Rhea" id="RHEA-COMP:9704"/>
        <dbReference type="ChEBI" id="CHEBI:15378"/>
        <dbReference type="ChEBI" id="CHEBI:30616"/>
        <dbReference type="ChEBI" id="CHEBI:33019"/>
        <dbReference type="ChEBI" id="CHEBI:57926"/>
        <dbReference type="ChEBI" id="CHEBI:78442"/>
        <dbReference type="ChEBI" id="CHEBI:78534"/>
        <dbReference type="ChEBI" id="CHEBI:456215"/>
        <dbReference type="EC" id="6.1.1.3"/>
    </reaction>
</comment>
<comment type="cofactor">
    <cofactor evidence="1">
        <name>Zn(2+)</name>
        <dbReference type="ChEBI" id="CHEBI:29105"/>
    </cofactor>
    <text evidence="1">Binds 1 zinc ion per subunit.</text>
</comment>
<comment type="subunit">
    <text evidence="1">Homodimer.</text>
</comment>
<comment type="subcellular location">
    <subcellularLocation>
        <location evidence="1">Cytoplasm</location>
    </subcellularLocation>
</comment>
<comment type="similarity">
    <text evidence="1">Belongs to the class-II aminoacyl-tRNA synthetase family.</text>
</comment>